<name>APT_CLOBK</name>
<evidence type="ECO:0000255" key="1">
    <source>
        <dbReference type="HAMAP-Rule" id="MF_00004"/>
    </source>
</evidence>
<organism>
    <name type="scientific">Clostridium botulinum (strain Okra / Type B1)</name>
    <dbReference type="NCBI Taxonomy" id="498213"/>
    <lineage>
        <taxon>Bacteria</taxon>
        <taxon>Bacillati</taxon>
        <taxon>Bacillota</taxon>
        <taxon>Clostridia</taxon>
        <taxon>Eubacteriales</taxon>
        <taxon>Clostridiaceae</taxon>
        <taxon>Clostridium</taxon>
    </lineage>
</organism>
<accession>B1IME3</accession>
<reference key="1">
    <citation type="journal article" date="2007" name="PLoS ONE">
        <title>Analysis of the neurotoxin complex genes in Clostridium botulinum A1-A4 and B1 strains: BoNT/A3, /Ba4 and /B1 clusters are located within plasmids.</title>
        <authorList>
            <person name="Smith T.J."/>
            <person name="Hill K.K."/>
            <person name="Foley B.T."/>
            <person name="Detter J.C."/>
            <person name="Munk A.C."/>
            <person name="Bruce D.C."/>
            <person name="Doggett N.A."/>
            <person name="Smith L.A."/>
            <person name="Marks J.D."/>
            <person name="Xie G."/>
            <person name="Brettin T.S."/>
        </authorList>
    </citation>
    <scope>NUCLEOTIDE SEQUENCE [LARGE SCALE GENOMIC DNA]</scope>
    <source>
        <strain>Okra / Type B1</strain>
    </source>
</reference>
<keyword id="KW-0963">Cytoplasm</keyword>
<keyword id="KW-0328">Glycosyltransferase</keyword>
<keyword id="KW-0660">Purine salvage</keyword>
<keyword id="KW-0808">Transferase</keyword>
<proteinExistence type="inferred from homology"/>
<gene>
    <name evidence="1" type="primary">apt</name>
    <name type="ordered locus">CLD_1480</name>
</gene>
<comment type="function">
    <text evidence="1">Catalyzes a salvage reaction resulting in the formation of AMP, that is energically less costly than de novo synthesis.</text>
</comment>
<comment type="catalytic activity">
    <reaction evidence="1">
        <text>AMP + diphosphate = 5-phospho-alpha-D-ribose 1-diphosphate + adenine</text>
        <dbReference type="Rhea" id="RHEA:16609"/>
        <dbReference type="ChEBI" id="CHEBI:16708"/>
        <dbReference type="ChEBI" id="CHEBI:33019"/>
        <dbReference type="ChEBI" id="CHEBI:58017"/>
        <dbReference type="ChEBI" id="CHEBI:456215"/>
        <dbReference type="EC" id="2.4.2.7"/>
    </reaction>
</comment>
<comment type="pathway">
    <text evidence="1">Purine metabolism; AMP biosynthesis via salvage pathway; AMP from adenine: step 1/1.</text>
</comment>
<comment type="subunit">
    <text evidence="1">Homodimer.</text>
</comment>
<comment type="subcellular location">
    <subcellularLocation>
        <location evidence="1">Cytoplasm</location>
    </subcellularLocation>
</comment>
<comment type="similarity">
    <text evidence="1">Belongs to the purine/pyrimidine phosphoribosyltransferase family.</text>
</comment>
<feature type="chain" id="PRO_0000334713" description="Adenine phosphoribosyltransferase">
    <location>
        <begin position="1"/>
        <end position="172"/>
    </location>
</feature>
<protein>
    <recommendedName>
        <fullName evidence="1">Adenine phosphoribosyltransferase</fullName>
        <shortName evidence="1">APRT</shortName>
        <ecNumber evidence="1">2.4.2.7</ecNumber>
    </recommendedName>
</protein>
<dbReference type="EC" id="2.4.2.7" evidence="1"/>
<dbReference type="EMBL" id="CP000939">
    <property type="protein sequence ID" value="ACA46221.1"/>
    <property type="molecule type" value="Genomic_DNA"/>
</dbReference>
<dbReference type="RefSeq" id="WP_003357763.1">
    <property type="nucleotide sequence ID" value="NC_010516.1"/>
</dbReference>
<dbReference type="SMR" id="B1IME3"/>
<dbReference type="KEGG" id="cbb:CLD_1480"/>
<dbReference type="HOGENOM" id="CLU_063339_3_0_9"/>
<dbReference type="UniPathway" id="UPA00588">
    <property type="reaction ID" value="UER00646"/>
</dbReference>
<dbReference type="Proteomes" id="UP000008541">
    <property type="component" value="Chromosome"/>
</dbReference>
<dbReference type="GO" id="GO:0005737">
    <property type="term" value="C:cytoplasm"/>
    <property type="evidence" value="ECO:0007669"/>
    <property type="project" value="UniProtKB-SubCell"/>
</dbReference>
<dbReference type="GO" id="GO:0002055">
    <property type="term" value="F:adenine binding"/>
    <property type="evidence" value="ECO:0007669"/>
    <property type="project" value="TreeGrafter"/>
</dbReference>
<dbReference type="GO" id="GO:0003999">
    <property type="term" value="F:adenine phosphoribosyltransferase activity"/>
    <property type="evidence" value="ECO:0007669"/>
    <property type="project" value="UniProtKB-UniRule"/>
</dbReference>
<dbReference type="GO" id="GO:0016208">
    <property type="term" value="F:AMP binding"/>
    <property type="evidence" value="ECO:0007669"/>
    <property type="project" value="TreeGrafter"/>
</dbReference>
<dbReference type="GO" id="GO:0006168">
    <property type="term" value="P:adenine salvage"/>
    <property type="evidence" value="ECO:0007669"/>
    <property type="project" value="InterPro"/>
</dbReference>
<dbReference type="GO" id="GO:0044209">
    <property type="term" value="P:AMP salvage"/>
    <property type="evidence" value="ECO:0007669"/>
    <property type="project" value="UniProtKB-UniRule"/>
</dbReference>
<dbReference type="GO" id="GO:0006166">
    <property type="term" value="P:purine ribonucleoside salvage"/>
    <property type="evidence" value="ECO:0007669"/>
    <property type="project" value="UniProtKB-KW"/>
</dbReference>
<dbReference type="CDD" id="cd06223">
    <property type="entry name" value="PRTases_typeI"/>
    <property type="match status" value="1"/>
</dbReference>
<dbReference type="FunFam" id="3.40.50.2020:FF:000004">
    <property type="entry name" value="Adenine phosphoribosyltransferase"/>
    <property type="match status" value="1"/>
</dbReference>
<dbReference type="Gene3D" id="3.40.50.2020">
    <property type="match status" value="1"/>
</dbReference>
<dbReference type="HAMAP" id="MF_00004">
    <property type="entry name" value="Aden_phosphoribosyltr"/>
    <property type="match status" value="1"/>
</dbReference>
<dbReference type="InterPro" id="IPR005764">
    <property type="entry name" value="Ade_phspho_trans"/>
</dbReference>
<dbReference type="InterPro" id="IPR000836">
    <property type="entry name" value="PRibTrfase_dom"/>
</dbReference>
<dbReference type="InterPro" id="IPR029057">
    <property type="entry name" value="PRTase-like"/>
</dbReference>
<dbReference type="InterPro" id="IPR050054">
    <property type="entry name" value="UPRTase/APRTase"/>
</dbReference>
<dbReference type="NCBIfam" id="TIGR01090">
    <property type="entry name" value="apt"/>
    <property type="match status" value="1"/>
</dbReference>
<dbReference type="NCBIfam" id="NF002633">
    <property type="entry name" value="PRK02304.1-2"/>
    <property type="match status" value="1"/>
</dbReference>
<dbReference type="NCBIfam" id="NF002634">
    <property type="entry name" value="PRK02304.1-3"/>
    <property type="match status" value="1"/>
</dbReference>
<dbReference type="NCBIfam" id="NF002636">
    <property type="entry name" value="PRK02304.1-5"/>
    <property type="match status" value="1"/>
</dbReference>
<dbReference type="NCBIfam" id="NF009211">
    <property type="entry name" value="PRK12560.1"/>
    <property type="match status" value="1"/>
</dbReference>
<dbReference type="PANTHER" id="PTHR32315">
    <property type="entry name" value="ADENINE PHOSPHORIBOSYLTRANSFERASE"/>
    <property type="match status" value="1"/>
</dbReference>
<dbReference type="PANTHER" id="PTHR32315:SF3">
    <property type="entry name" value="ADENINE PHOSPHORIBOSYLTRANSFERASE"/>
    <property type="match status" value="1"/>
</dbReference>
<dbReference type="Pfam" id="PF00156">
    <property type="entry name" value="Pribosyltran"/>
    <property type="match status" value="1"/>
</dbReference>
<dbReference type="SUPFAM" id="SSF53271">
    <property type="entry name" value="PRTase-like"/>
    <property type="match status" value="1"/>
</dbReference>
<sequence>MNLKEHIRVIENFPKEGISFKDVTTILQDGKVLNYTIDKLAENLKDKKIDKIVGPEARGFLFGTPLAYKLGVGFVPVRKKGKLPYETISCKYDLEYGQDELQIHKDSIKKGDKVAIVDDLLATGGTIASVVKLVEELGGEVVNVSFVIELTDLKGKDKLEGYDINSLVQYNI</sequence>